<feature type="chain" id="PRO_0000314260" description="Cyclin-C">
    <location>
        <begin position="1"/>
        <end position="265"/>
    </location>
</feature>
<feature type="domain" description="Cyclin N-terminal">
    <location>
        <begin position="48"/>
        <end position="151"/>
    </location>
</feature>
<keyword id="KW-0010">Activator</keyword>
<keyword id="KW-0195">Cyclin</keyword>
<keyword id="KW-0539">Nucleus</keyword>
<keyword id="KW-1185">Reference proteome</keyword>
<keyword id="KW-0678">Repressor</keyword>
<keyword id="KW-0804">Transcription</keyword>
<keyword id="KW-0805">Transcription regulation</keyword>
<evidence type="ECO:0000250" key="1"/>
<evidence type="ECO:0000305" key="2"/>
<dbReference type="EMBL" id="CH478020">
    <property type="protein sequence ID" value="EAT34357.1"/>
    <property type="molecule type" value="Genomic_DNA"/>
</dbReference>
<dbReference type="RefSeq" id="XP_001663584.1">
    <property type="nucleotide sequence ID" value="XM_001663534.1"/>
</dbReference>
<dbReference type="SMR" id="Q16JA2"/>
<dbReference type="FunCoup" id="Q16JA2">
    <property type="interactions" value="2194"/>
</dbReference>
<dbReference type="STRING" id="7159.Q16JA2"/>
<dbReference type="PaxDb" id="7159-AAEL013397-PA"/>
<dbReference type="GeneID" id="5577815"/>
<dbReference type="KEGG" id="aag:5577815"/>
<dbReference type="VEuPathDB" id="VectorBase:AAEL013397"/>
<dbReference type="eggNOG" id="KOG0794">
    <property type="taxonomic scope" value="Eukaryota"/>
</dbReference>
<dbReference type="HOGENOM" id="CLU_034754_1_1_1"/>
<dbReference type="InParanoid" id="Q16JA2"/>
<dbReference type="OMA" id="CLLHPPH"/>
<dbReference type="OrthoDB" id="10266018at2759"/>
<dbReference type="PhylomeDB" id="Q16JA2"/>
<dbReference type="Proteomes" id="UP000008820">
    <property type="component" value="Unassembled WGS sequence"/>
</dbReference>
<dbReference type="Proteomes" id="UP000682892">
    <property type="component" value="Chromosome 2"/>
</dbReference>
<dbReference type="GO" id="GO:0005634">
    <property type="term" value="C:nucleus"/>
    <property type="evidence" value="ECO:0007669"/>
    <property type="project" value="UniProtKB-SubCell"/>
</dbReference>
<dbReference type="GO" id="GO:0016538">
    <property type="term" value="F:cyclin-dependent protein serine/threonine kinase regulator activity"/>
    <property type="evidence" value="ECO:0007669"/>
    <property type="project" value="InterPro"/>
</dbReference>
<dbReference type="GO" id="GO:0006357">
    <property type="term" value="P:regulation of transcription by RNA polymerase II"/>
    <property type="evidence" value="ECO:0007669"/>
    <property type="project" value="InterPro"/>
</dbReference>
<dbReference type="CDD" id="cd20513">
    <property type="entry name" value="CYCLIN_CCNC_rpt1"/>
    <property type="match status" value="1"/>
</dbReference>
<dbReference type="CDD" id="cd20514">
    <property type="entry name" value="CYCLIN_CCNC_rpt2"/>
    <property type="match status" value="1"/>
</dbReference>
<dbReference type="FunFam" id="1.10.472.10:FF:000015">
    <property type="entry name" value="Putative cyclin-c"/>
    <property type="match status" value="1"/>
</dbReference>
<dbReference type="Gene3D" id="1.10.472.10">
    <property type="entry name" value="Cyclin-like"/>
    <property type="match status" value="2"/>
</dbReference>
<dbReference type="InterPro" id="IPR013763">
    <property type="entry name" value="Cyclin-like_dom"/>
</dbReference>
<dbReference type="InterPro" id="IPR036915">
    <property type="entry name" value="Cyclin-like_sf"/>
</dbReference>
<dbReference type="InterPro" id="IPR043198">
    <property type="entry name" value="Cyclin/Ssn8"/>
</dbReference>
<dbReference type="InterPro" id="IPR031658">
    <property type="entry name" value="Cyclin_C_2"/>
</dbReference>
<dbReference type="InterPro" id="IPR006671">
    <property type="entry name" value="Cyclin_N"/>
</dbReference>
<dbReference type="PANTHER" id="PTHR10026">
    <property type="entry name" value="CYCLIN"/>
    <property type="match status" value="1"/>
</dbReference>
<dbReference type="Pfam" id="PF16899">
    <property type="entry name" value="Cyclin_C_2"/>
    <property type="match status" value="1"/>
</dbReference>
<dbReference type="Pfam" id="PF00134">
    <property type="entry name" value="Cyclin_N"/>
    <property type="match status" value="1"/>
</dbReference>
<dbReference type="PIRSF" id="PIRSF028758">
    <property type="entry name" value="Cyclin, C/H/G types"/>
    <property type="match status" value="1"/>
</dbReference>
<dbReference type="SMART" id="SM00385">
    <property type="entry name" value="CYCLIN"/>
    <property type="match status" value="2"/>
</dbReference>
<dbReference type="SUPFAM" id="SSF47954">
    <property type="entry name" value="Cyclin-like"/>
    <property type="match status" value="2"/>
</dbReference>
<sequence>MAGNFWQSSHHQQWILDKQDLIRERQHDLKNLTEEEYQKIFMFFANVIQVLGEQLKLRQQVIATATVYFKRFYARNSLKCIDPLLLAPTCILLASKVEEFGVISNSRLITTCQTVIKNKFSYAYQQEFPYRTNHILECEFYLLENLDCCLIVYQPYRPLLQLIQDIGQEDQLLTLTWRLINDSLRTDVSLLYPPYQIAIGCLQIACVILQKELKAWFAELNVDMEKVQEIARAILNVFELWKSYDEKEIQGLLEKMPKPKPAPQR</sequence>
<gene>
    <name type="primary">CycC</name>
    <name type="ORF">AAEL013397</name>
</gene>
<organism>
    <name type="scientific">Aedes aegypti</name>
    <name type="common">Yellowfever mosquito</name>
    <name type="synonym">Culex aegypti</name>
    <dbReference type="NCBI Taxonomy" id="7159"/>
    <lineage>
        <taxon>Eukaryota</taxon>
        <taxon>Metazoa</taxon>
        <taxon>Ecdysozoa</taxon>
        <taxon>Arthropoda</taxon>
        <taxon>Hexapoda</taxon>
        <taxon>Insecta</taxon>
        <taxon>Pterygota</taxon>
        <taxon>Neoptera</taxon>
        <taxon>Endopterygota</taxon>
        <taxon>Diptera</taxon>
        <taxon>Nematocera</taxon>
        <taxon>Culicoidea</taxon>
        <taxon>Culicidae</taxon>
        <taxon>Culicinae</taxon>
        <taxon>Aedini</taxon>
        <taxon>Aedes</taxon>
        <taxon>Stegomyia</taxon>
    </lineage>
</organism>
<proteinExistence type="inferred from homology"/>
<comment type="function">
    <text evidence="1">Component of the Mediator complex, a coactivator involved in regulated gene transcription of nearly all RNA polymerase II-dependent genes. Mediator functions as a bridge to convey information from gene-specific regulatory proteins to the basal RNA polymerase II transcription machinery. Mediator is recruited to promoters by direct interactions with regulatory proteins and serves as a scaffold for the assembly of a functional preinitiation complex with RNA polymerase II and the general transcription factors. Binds to and activates cyclin-dependent kinase Cdk8 that phosphorylates the CTD (C-terminal domain) of the large subunit of RNA polymerase II (RNAp II), which may inhibit the formation of a transcription initiation complex (By similarity).</text>
</comment>
<comment type="subunit">
    <text evidence="1">Component of the Cdk8 module of the Mediator complex.</text>
</comment>
<comment type="subcellular location">
    <subcellularLocation>
        <location evidence="1">Nucleus</location>
    </subcellularLocation>
</comment>
<comment type="similarity">
    <text evidence="2">Belongs to the cyclin family. Cyclin C subfamily.</text>
</comment>
<protein>
    <recommendedName>
        <fullName>Cyclin-C</fullName>
    </recommendedName>
</protein>
<reference key="1">
    <citation type="journal article" date="2007" name="Science">
        <title>Genome sequence of Aedes aegypti, a major arbovirus vector.</title>
        <authorList>
            <person name="Nene V."/>
            <person name="Wortman J.R."/>
            <person name="Lawson D."/>
            <person name="Haas B.J."/>
            <person name="Kodira C.D."/>
            <person name="Tu Z.J."/>
            <person name="Loftus B.J."/>
            <person name="Xi Z."/>
            <person name="Megy K."/>
            <person name="Grabherr M."/>
            <person name="Ren Q."/>
            <person name="Zdobnov E.M."/>
            <person name="Lobo N.F."/>
            <person name="Campbell K.S."/>
            <person name="Brown S.E."/>
            <person name="Bonaldo M.F."/>
            <person name="Zhu J."/>
            <person name="Sinkins S.P."/>
            <person name="Hogenkamp D.G."/>
            <person name="Amedeo P."/>
            <person name="Arensburger P."/>
            <person name="Atkinson P.W."/>
            <person name="Bidwell S.L."/>
            <person name="Biedler J."/>
            <person name="Birney E."/>
            <person name="Bruggner R.V."/>
            <person name="Costas J."/>
            <person name="Coy M.R."/>
            <person name="Crabtree J."/>
            <person name="Crawford M."/>
            <person name="DeBruyn B."/>
            <person name="DeCaprio D."/>
            <person name="Eiglmeier K."/>
            <person name="Eisenstadt E."/>
            <person name="El-Dorry H."/>
            <person name="Gelbart W.M."/>
            <person name="Gomes S.L."/>
            <person name="Hammond M."/>
            <person name="Hannick L.I."/>
            <person name="Hogan J.R."/>
            <person name="Holmes M.H."/>
            <person name="Jaffe D."/>
            <person name="Johnston S.J."/>
            <person name="Kennedy R.C."/>
            <person name="Koo H."/>
            <person name="Kravitz S."/>
            <person name="Kriventseva E.V."/>
            <person name="Kulp D."/>
            <person name="Labutti K."/>
            <person name="Lee E."/>
            <person name="Li S."/>
            <person name="Lovin D.D."/>
            <person name="Mao C."/>
            <person name="Mauceli E."/>
            <person name="Menck C.F."/>
            <person name="Miller J.R."/>
            <person name="Montgomery P."/>
            <person name="Mori A."/>
            <person name="Nascimento A.L."/>
            <person name="Naveira H.F."/>
            <person name="Nusbaum C."/>
            <person name="O'Leary S.B."/>
            <person name="Orvis J."/>
            <person name="Pertea M."/>
            <person name="Quesneville H."/>
            <person name="Reidenbach K.R."/>
            <person name="Rogers Y.-H.C."/>
            <person name="Roth C.W."/>
            <person name="Schneider J.R."/>
            <person name="Schatz M."/>
            <person name="Shumway M."/>
            <person name="Stanke M."/>
            <person name="Stinson E.O."/>
            <person name="Tubio J.M.C."/>
            <person name="Vanzee J.P."/>
            <person name="Verjovski-Almeida S."/>
            <person name="Werner D."/>
            <person name="White O.R."/>
            <person name="Wyder S."/>
            <person name="Zeng Q."/>
            <person name="Zhao Q."/>
            <person name="Zhao Y."/>
            <person name="Hill C.A."/>
            <person name="Raikhel A.S."/>
            <person name="Soares M.B."/>
            <person name="Knudson D.L."/>
            <person name="Lee N.H."/>
            <person name="Galagan J."/>
            <person name="Salzberg S.L."/>
            <person name="Paulsen I.T."/>
            <person name="Dimopoulos G."/>
            <person name="Collins F.H."/>
            <person name="Bruce B."/>
            <person name="Fraser-Liggett C.M."/>
            <person name="Severson D.W."/>
        </authorList>
    </citation>
    <scope>NUCLEOTIDE SEQUENCE [LARGE SCALE GENOMIC DNA]</scope>
    <source>
        <strain>LVPib12</strain>
    </source>
</reference>
<name>CCNC_AEDAE</name>
<accession>Q16JA2</accession>